<gene>
    <name evidence="6" type="primary">TRIM49D1</name>
    <name type="synonym">TRIM49L</name>
    <name type="synonym">TRIM49L1</name>
</gene>
<gene>
    <name evidence="5" type="primary">TRIM49D2</name>
    <name type="synonym">TRIM49D2P</name>
</gene>
<evidence type="ECO:0000255" key="1">
    <source>
        <dbReference type="PROSITE-ProRule" id="PRU00024"/>
    </source>
</evidence>
<evidence type="ECO:0000255" key="2">
    <source>
        <dbReference type="PROSITE-ProRule" id="PRU00175"/>
    </source>
</evidence>
<evidence type="ECO:0000255" key="3">
    <source>
        <dbReference type="PROSITE-ProRule" id="PRU00548"/>
    </source>
</evidence>
<evidence type="ECO:0000305" key="4"/>
<evidence type="ECO:0000312" key="5">
    <source>
        <dbReference type="HGNC" id="HGNC:37217"/>
    </source>
</evidence>
<evidence type="ECO:0000312" key="6">
    <source>
        <dbReference type="HGNC" id="HGNC:43973"/>
    </source>
</evidence>
<comment type="similarity">
    <text evidence="4">Belongs to the TRIM/RBCC family.</text>
</comment>
<comment type="caution">
    <text evidence="4">The two loci are in opposite orientation.</text>
</comment>
<dbReference type="EMBL" id="AP004607">
    <property type="status" value="NOT_ANNOTATED_CDS"/>
    <property type="molecule type" value="Genomic_DNA"/>
</dbReference>
<dbReference type="EMBL" id="DW009626">
    <property type="status" value="NOT_ANNOTATED_CDS"/>
    <property type="molecule type" value="mRNA"/>
</dbReference>
<dbReference type="EMBL" id="JF968447">
    <property type="protein sequence ID" value="AFI99090.1"/>
    <property type="molecule type" value="mRNA"/>
</dbReference>
<dbReference type="EMBL" id="JF968448">
    <property type="protein sequence ID" value="AFI99091.1"/>
    <property type="molecule type" value="mRNA"/>
</dbReference>
<dbReference type="CCDS" id="CCDS60930.1"/>
<dbReference type="RefSeq" id="NP_001098992.1">
    <property type="nucleotide sequence ID" value="NM_001105522.1"/>
</dbReference>
<dbReference type="RefSeq" id="NP_001193556.1">
    <property type="nucleotide sequence ID" value="NM_001206627.2"/>
</dbReference>
<dbReference type="RefSeq" id="NP_001371840.1">
    <property type="nucleotide sequence ID" value="NM_001384911.1"/>
</dbReference>
<dbReference type="RefSeq" id="XP_011541118.1">
    <property type="nucleotide sequence ID" value="XM_011542816.2"/>
</dbReference>
<dbReference type="SMR" id="C9J1S8"/>
<dbReference type="BioGRID" id="609785">
    <property type="interactions" value="1"/>
</dbReference>
<dbReference type="FunCoup" id="C9J1S8">
    <property type="interactions" value="6"/>
</dbReference>
<dbReference type="iPTMnet" id="C9J1S8"/>
<dbReference type="PhosphoSitePlus" id="C9J1S8"/>
<dbReference type="BioMuta" id="TRIM49D2"/>
<dbReference type="jPOST" id="C9J1S8"/>
<dbReference type="MassIVE" id="C9J1S8"/>
<dbReference type="PaxDb" id="9606-ENSP00000474850"/>
<dbReference type="PeptideAtlas" id="C9J1S8"/>
<dbReference type="Antibodypedia" id="82238">
    <property type="antibodies" value="2 antibodies from 2 providers"/>
</dbReference>
<dbReference type="DNASU" id="399939"/>
<dbReference type="Ensembl" id="ENST00000420869.3">
    <property type="protein sequence ID" value="ENSP00000474678.1"/>
    <property type="gene ID" value="ENSG00000223417.9"/>
</dbReference>
<dbReference type="Ensembl" id="ENST00000526396.3">
    <property type="protein sequence ID" value="ENSP00000485325.1"/>
    <property type="gene ID" value="ENSG00000233802.8"/>
</dbReference>
<dbReference type="Ensembl" id="ENST00000530311.6">
    <property type="protein sequence ID" value="ENSP00000474850.1"/>
    <property type="gene ID" value="ENSG00000223417.9"/>
</dbReference>
<dbReference type="Ensembl" id="ENST00000623787.3">
    <property type="protein sequence ID" value="ENSP00000485097.1"/>
    <property type="gene ID" value="ENSG00000233802.8"/>
</dbReference>
<dbReference type="GeneID" id="399939"/>
<dbReference type="GeneID" id="729384"/>
<dbReference type="KEGG" id="hsa:399939"/>
<dbReference type="KEGG" id="hsa:729384"/>
<dbReference type="MANE-Select" id="ENST00000420869.3">
    <property type="protein sequence ID" value="ENSP00000474678.1"/>
    <property type="RefSeq nucleotide sequence ID" value="NM_001384911.1"/>
    <property type="RefSeq protein sequence ID" value="NP_001371840.1"/>
</dbReference>
<dbReference type="MANE-Select" id="ENST00000623787.3">
    <property type="protein sequence ID" value="ENSP00000485097.1"/>
    <property type="RefSeq nucleotide sequence ID" value="NM_001105522.1"/>
    <property type="RefSeq protein sequence ID" value="NP_001098992.1"/>
</dbReference>
<dbReference type="UCSC" id="uc009yvu.4">
    <property type="organism name" value="human"/>
</dbReference>
<dbReference type="AGR" id="HGNC:37217"/>
<dbReference type="AGR" id="HGNC:43973"/>
<dbReference type="CTD" id="399939"/>
<dbReference type="CTD" id="729384"/>
<dbReference type="DisGeNET" id="399939"/>
<dbReference type="GeneCards" id="TRIM49D1"/>
<dbReference type="GeneCards" id="TRIM49D2"/>
<dbReference type="HGNC" id="HGNC:43973">
    <property type="gene designation" value="TRIM49D1"/>
</dbReference>
<dbReference type="HGNC" id="HGNC:37217">
    <property type="gene designation" value="TRIM49D2"/>
</dbReference>
<dbReference type="HPA" id="ENSG00000223417">
    <property type="expression patterns" value="Tissue enhanced (liver)"/>
</dbReference>
<dbReference type="HPA" id="ENSG00000233802">
    <property type="expression patterns" value="Not detected"/>
</dbReference>
<dbReference type="neXtProt" id="NX_C9J1S8"/>
<dbReference type="OpenTargets" id="ENSG00000223417"/>
<dbReference type="PharmGKB" id="PA165543723"/>
<dbReference type="VEuPathDB" id="HostDB:ENSG00000223417"/>
<dbReference type="VEuPathDB" id="HostDB:ENSG00000233802"/>
<dbReference type="eggNOG" id="KOG2177">
    <property type="taxonomic scope" value="Eukaryota"/>
</dbReference>
<dbReference type="GeneTree" id="ENSGT00940000163213"/>
<dbReference type="HOGENOM" id="CLU_013137_0_3_1"/>
<dbReference type="InParanoid" id="C9J1S8"/>
<dbReference type="OMA" id="VICEKHQ"/>
<dbReference type="PAN-GO" id="C9J1S8">
    <property type="GO annotations" value="5 GO annotations based on evolutionary models"/>
</dbReference>
<dbReference type="PhylomeDB" id="C9J1S8"/>
<dbReference type="SIGNOR" id="C9J1S8"/>
<dbReference type="BioGRID-ORCS" id="399939">
    <property type="hits" value="284 hits in 1036 CRISPR screens"/>
</dbReference>
<dbReference type="BioGRID-ORCS" id="729384">
    <property type="hits" value="15 hits in 147 CRISPR screens"/>
</dbReference>
<dbReference type="ChiTaRS" id="TRIM49D2">
    <property type="organism name" value="human"/>
</dbReference>
<dbReference type="Pharos" id="C9J1S8">
    <property type="development level" value="Tdark"/>
</dbReference>
<dbReference type="PRO" id="PR:C9J1S8"/>
<dbReference type="Proteomes" id="UP000005640">
    <property type="component" value="Chromosome 11"/>
</dbReference>
<dbReference type="RNAct" id="C9J1S8">
    <property type="molecule type" value="protein"/>
</dbReference>
<dbReference type="Bgee" id="ENSG00000223417">
    <property type="expression patterns" value="Expressed in male germ line stem cell (sensu Vertebrata) in testis and 8 other cell types or tissues"/>
</dbReference>
<dbReference type="ExpressionAtlas" id="C9J1S8">
    <property type="expression patterns" value="baseline and differential"/>
</dbReference>
<dbReference type="GO" id="GO:0005737">
    <property type="term" value="C:cytoplasm"/>
    <property type="evidence" value="ECO:0000318"/>
    <property type="project" value="GO_Central"/>
</dbReference>
<dbReference type="GO" id="GO:0061630">
    <property type="term" value="F:ubiquitin protein ligase activity"/>
    <property type="evidence" value="ECO:0000318"/>
    <property type="project" value="GO_Central"/>
</dbReference>
<dbReference type="GO" id="GO:0008270">
    <property type="term" value="F:zinc ion binding"/>
    <property type="evidence" value="ECO:0007669"/>
    <property type="project" value="UniProtKB-KW"/>
</dbReference>
<dbReference type="GO" id="GO:0045087">
    <property type="term" value="P:innate immune response"/>
    <property type="evidence" value="ECO:0000318"/>
    <property type="project" value="GO_Central"/>
</dbReference>
<dbReference type="GO" id="GO:0010468">
    <property type="term" value="P:regulation of gene expression"/>
    <property type="evidence" value="ECO:0000318"/>
    <property type="project" value="GO_Central"/>
</dbReference>
<dbReference type="CDD" id="cd19783">
    <property type="entry name" value="Bbox2_TRIM43-like"/>
    <property type="match status" value="1"/>
</dbReference>
<dbReference type="CDD" id="cd16603">
    <property type="entry name" value="RING-HC_TRIM43-like_C-IV"/>
    <property type="match status" value="1"/>
</dbReference>
<dbReference type="Gene3D" id="2.60.120.920">
    <property type="match status" value="1"/>
</dbReference>
<dbReference type="Gene3D" id="3.30.160.60">
    <property type="entry name" value="Classic Zinc Finger"/>
    <property type="match status" value="1"/>
</dbReference>
<dbReference type="Gene3D" id="3.30.40.10">
    <property type="entry name" value="Zinc/RING finger domain, C3HC4 (zinc finger)"/>
    <property type="match status" value="1"/>
</dbReference>
<dbReference type="InterPro" id="IPR001870">
    <property type="entry name" value="B30.2/SPRY"/>
</dbReference>
<dbReference type="InterPro" id="IPR043136">
    <property type="entry name" value="B30.2/SPRY_sf"/>
</dbReference>
<dbReference type="InterPro" id="IPR003879">
    <property type="entry name" value="Butyrophylin_SPRY"/>
</dbReference>
<dbReference type="InterPro" id="IPR013320">
    <property type="entry name" value="ConA-like_dom_sf"/>
</dbReference>
<dbReference type="InterPro" id="IPR003877">
    <property type="entry name" value="SPRY_dom"/>
</dbReference>
<dbReference type="InterPro" id="IPR050143">
    <property type="entry name" value="TRIM/RBCC"/>
</dbReference>
<dbReference type="InterPro" id="IPR000315">
    <property type="entry name" value="Znf_B-box"/>
</dbReference>
<dbReference type="InterPro" id="IPR001841">
    <property type="entry name" value="Znf_RING"/>
</dbReference>
<dbReference type="InterPro" id="IPR013083">
    <property type="entry name" value="Znf_RING/FYVE/PHD"/>
</dbReference>
<dbReference type="PANTHER" id="PTHR24103">
    <property type="entry name" value="E3 UBIQUITIN-PROTEIN LIGASE TRIM"/>
    <property type="match status" value="1"/>
</dbReference>
<dbReference type="Pfam" id="PF00622">
    <property type="entry name" value="SPRY"/>
    <property type="match status" value="1"/>
</dbReference>
<dbReference type="Pfam" id="PF00643">
    <property type="entry name" value="zf-B_box"/>
    <property type="match status" value="1"/>
</dbReference>
<dbReference type="Pfam" id="PF15227">
    <property type="entry name" value="zf-C3HC4_4"/>
    <property type="match status" value="1"/>
</dbReference>
<dbReference type="PRINTS" id="PR01407">
    <property type="entry name" value="BUTYPHLNCDUF"/>
</dbReference>
<dbReference type="SMART" id="SM00336">
    <property type="entry name" value="BBOX"/>
    <property type="match status" value="1"/>
</dbReference>
<dbReference type="SMART" id="SM00184">
    <property type="entry name" value="RING"/>
    <property type="match status" value="1"/>
</dbReference>
<dbReference type="SMART" id="SM00449">
    <property type="entry name" value="SPRY"/>
    <property type="match status" value="1"/>
</dbReference>
<dbReference type="SUPFAM" id="SSF57845">
    <property type="entry name" value="B-box zinc-binding domain"/>
    <property type="match status" value="1"/>
</dbReference>
<dbReference type="SUPFAM" id="SSF49899">
    <property type="entry name" value="Concanavalin A-like lectins/glucanases"/>
    <property type="match status" value="1"/>
</dbReference>
<dbReference type="SUPFAM" id="SSF57850">
    <property type="entry name" value="RING/U-box"/>
    <property type="match status" value="1"/>
</dbReference>
<dbReference type="PROSITE" id="PS50188">
    <property type="entry name" value="B302_SPRY"/>
    <property type="match status" value="1"/>
</dbReference>
<dbReference type="PROSITE" id="PS50119">
    <property type="entry name" value="ZF_BBOX"/>
    <property type="match status" value="1"/>
</dbReference>
<dbReference type="PROSITE" id="PS50089">
    <property type="entry name" value="ZF_RING_2"/>
    <property type="match status" value="1"/>
</dbReference>
<protein>
    <recommendedName>
        <fullName evidence="4">Tripartite motif-containing protein 49D</fullName>
    </recommendedName>
    <alternativeName>
        <fullName>Tripartite motif-containing protein 49-like protein</fullName>
    </alternativeName>
    <alternativeName>
        <fullName evidence="6">Tripartite motif-containing protein 49D1</fullName>
    </alternativeName>
    <alternativeName>
        <fullName evidence="5">Tripartite motif-containing protein 49D2</fullName>
    </alternativeName>
</protein>
<organism>
    <name type="scientific">Homo sapiens</name>
    <name type="common">Human</name>
    <dbReference type="NCBI Taxonomy" id="9606"/>
    <lineage>
        <taxon>Eukaryota</taxon>
        <taxon>Metazoa</taxon>
        <taxon>Chordata</taxon>
        <taxon>Craniata</taxon>
        <taxon>Vertebrata</taxon>
        <taxon>Euteleostomi</taxon>
        <taxon>Mammalia</taxon>
        <taxon>Eutheria</taxon>
        <taxon>Euarchontoglires</taxon>
        <taxon>Primates</taxon>
        <taxon>Haplorrhini</taxon>
        <taxon>Catarrhini</taxon>
        <taxon>Hominidae</taxon>
        <taxon>Homo</taxon>
    </lineage>
</organism>
<keyword id="KW-0479">Metal-binding</keyword>
<keyword id="KW-1185">Reference proteome</keyword>
<keyword id="KW-0862">Zinc</keyword>
<keyword id="KW-0863">Zinc-finger</keyword>
<feature type="chain" id="PRO_0000395402" description="Tripartite motif-containing protein 49D">
    <location>
        <begin position="1"/>
        <end position="452"/>
    </location>
</feature>
<feature type="domain" description="B30.2/SPRY" evidence="3">
    <location>
        <begin position="269"/>
        <end position="452"/>
    </location>
</feature>
<feature type="zinc finger region" description="RING-type" evidence="2">
    <location>
        <begin position="15"/>
        <end position="56"/>
    </location>
</feature>
<feature type="zinc finger region" description="B box-type" evidence="1">
    <location>
        <begin position="88"/>
        <end position="129"/>
    </location>
</feature>
<feature type="binding site" evidence="1">
    <location>
        <position position="93"/>
    </location>
    <ligand>
        <name>Zn(2+)</name>
        <dbReference type="ChEBI" id="CHEBI:29105"/>
    </ligand>
</feature>
<feature type="binding site" evidence="1">
    <location>
        <position position="96"/>
    </location>
    <ligand>
        <name>Zn(2+)</name>
        <dbReference type="ChEBI" id="CHEBI:29105"/>
    </ligand>
</feature>
<feature type="binding site" evidence="1">
    <location>
        <position position="115"/>
    </location>
    <ligand>
        <name>Zn(2+)</name>
        <dbReference type="ChEBI" id="CHEBI:29105"/>
    </ligand>
</feature>
<feature type="binding site" evidence="1">
    <location>
        <position position="121"/>
    </location>
    <ligand>
        <name>Zn(2+)</name>
        <dbReference type="ChEBI" id="CHEBI:29105"/>
    </ligand>
</feature>
<feature type="sequence conflict" description="In Ref. 2; DW009626." evidence="4" ref="2">
    <original>D</original>
    <variation>E</variation>
    <location>
        <position position="207"/>
    </location>
</feature>
<feature type="sequence conflict" description="In Ref. 2; DW009626." evidence="4" ref="2">
    <original>H</original>
    <variation>K</variation>
    <location>
        <position position="213"/>
    </location>
</feature>
<reference key="1">
    <citation type="journal article" date="2006" name="Nature">
        <title>Human chromosome 11 DNA sequence and analysis including novel gene identification.</title>
        <authorList>
            <person name="Taylor T.D."/>
            <person name="Noguchi H."/>
            <person name="Totoki Y."/>
            <person name="Toyoda A."/>
            <person name="Kuroki Y."/>
            <person name="Dewar K."/>
            <person name="Lloyd C."/>
            <person name="Itoh T."/>
            <person name="Takeda T."/>
            <person name="Kim D.-W."/>
            <person name="She X."/>
            <person name="Barlow K.F."/>
            <person name="Bloom T."/>
            <person name="Bruford E."/>
            <person name="Chang J.L."/>
            <person name="Cuomo C.A."/>
            <person name="Eichler E."/>
            <person name="FitzGerald M.G."/>
            <person name="Jaffe D.B."/>
            <person name="LaButti K."/>
            <person name="Nicol R."/>
            <person name="Park H.-S."/>
            <person name="Seaman C."/>
            <person name="Sougnez C."/>
            <person name="Yang X."/>
            <person name="Zimmer A.R."/>
            <person name="Zody M.C."/>
            <person name="Birren B.W."/>
            <person name="Nusbaum C."/>
            <person name="Fujiyama A."/>
            <person name="Hattori M."/>
            <person name="Rogers J."/>
            <person name="Lander E.S."/>
            <person name="Sakaki Y."/>
        </authorList>
    </citation>
    <scope>NUCLEOTIDE SEQUENCE [LARGE SCALE GENOMIC DNA]</scope>
</reference>
<reference key="2">
    <citation type="submission" date="2005-12" db="EMBL/GenBank/DDBJ databases">
        <title>Exhaustive RT-PCR and sequencing of all novel TWINSCAN predictions in human.</title>
        <authorList>
            <person name="Stevens M."/>
            <person name="Wei C."/>
            <person name="Gross S.S."/>
            <person name="McPherson J."/>
            <person name="Brent M.R."/>
        </authorList>
    </citation>
    <scope>NUCLEOTIDE SEQUENCE [LARGE SCALE MRNA] OF 155-229</scope>
</reference>
<reference key="3">
    <citation type="journal article" date="2011" name="PLoS Genet.">
        <title>Identification of a genomic reservoir for new TRIM genes in primate genomes.</title>
        <authorList>
            <person name="Han K."/>
            <person name="Lou D.I."/>
            <person name="Sawyer S.L."/>
        </authorList>
    </citation>
    <scope>NUCLEOTIDE SEQUENCE [MRNA] OF 222-303</scope>
</reference>
<sequence>MNSGISQVFQRELTCPICLNYFIDPVTIDCGHSFCRPCFYLNWQDIPILTQCFECLKTTQQRNLKTNIRLKKMASRARKASLWLFLSSEEQMCGTHRETKKIFCEVDRSLLCLLCSSSLEHRYHRHCPAEWAAEEHREKLLKKMQSLWEKVCENQRNLNVETTRISHWKDYVNVRLEAIRAEYQKMPAFHHEEEKHNLEMLKKKGKDIFHRLHLSKAKMAHRREILRGTYAELMKMCHKPDVELLQAFGDILHRSESVLLHMPQPLNLELRAGPITGLRDRLNQFRVDITLPHNEANSHIFRRGDLRSICIGCDRQNAPHITATPTSFLAWGAQTFTSGKYYWEVHVGDSWNWAFGVCNKYWKGTNQNGNIHGEEGLFSLGCVKNDIQCSLFTTSPLTLQYVPRPTNHVGLFLDCEARTVSFVDVNQSSPIHTIPNCSFSPPLRPIFCCVHL</sequence>
<proteinExistence type="evidence at transcript level"/>
<accession>C9J1S8</accession>
<accession>I1YAP9</accession>
<name>TR49D_HUMAN</name>